<accession>Q2KIP7</accession>
<evidence type="ECO:0000250" key="1"/>
<evidence type="ECO:0000250" key="2">
    <source>
        <dbReference type="UniProtKB" id="Q9UI95"/>
    </source>
</evidence>
<evidence type="ECO:0000255" key="3">
    <source>
        <dbReference type="PROSITE-ProRule" id="PRU00109"/>
    </source>
</evidence>
<dbReference type="EMBL" id="BC112559">
    <property type="protein sequence ID" value="AAI12560.1"/>
    <property type="molecule type" value="mRNA"/>
</dbReference>
<dbReference type="RefSeq" id="NP_001039411.1">
    <property type="nucleotide sequence ID" value="NM_001045946.2"/>
</dbReference>
<dbReference type="SMR" id="Q2KIP7"/>
<dbReference type="FunCoup" id="Q2KIP7">
    <property type="interactions" value="1844"/>
</dbReference>
<dbReference type="STRING" id="9913.ENSBTAP00000061520"/>
<dbReference type="PaxDb" id="9913-ENSBTAP00000017655"/>
<dbReference type="GeneID" id="506605"/>
<dbReference type="KEGG" id="bta:506605"/>
<dbReference type="CTD" id="10459"/>
<dbReference type="eggNOG" id="KOG3186">
    <property type="taxonomic scope" value="Eukaryota"/>
</dbReference>
<dbReference type="InParanoid" id="Q2KIP7"/>
<dbReference type="OrthoDB" id="21254at2759"/>
<dbReference type="Proteomes" id="UP000009136">
    <property type="component" value="Unplaced"/>
</dbReference>
<dbReference type="GO" id="GO:0005737">
    <property type="term" value="C:cytoplasm"/>
    <property type="evidence" value="ECO:0007669"/>
    <property type="project" value="UniProtKB-SubCell"/>
</dbReference>
<dbReference type="GO" id="GO:0005634">
    <property type="term" value="C:nucleus"/>
    <property type="evidence" value="ECO:0000250"/>
    <property type="project" value="UniProtKB"/>
</dbReference>
<dbReference type="GO" id="GO:0005819">
    <property type="term" value="C:spindle"/>
    <property type="evidence" value="ECO:0000250"/>
    <property type="project" value="UniProtKB"/>
</dbReference>
<dbReference type="GO" id="GO:0016035">
    <property type="term" value="C:zeta DNA polymerase complex"/>
    <property type="evidence" value="ECO:0000250"/>
    <property type="project" value="UniProtKB"/>
</dbReference>
<dbReference type="GO" id="GO:0008432">
    <property type="term" value="F:JUN kinase binding"/>
    <property type="evidence" value="ECO:0000250"/>
    <property type="project" value="UniProtKB"/>
</dbReference>
<dbReference type="GO" id="GO:0051301">
    <property type="term" value="P:cell division"/>
    <property type="evidence" value="ECO:0007669"/>
    <property type="project" value="UniProtKB-KW"/>
</dbReference>
<dbReference type="GO" id="GO:0042772">
    <property type="term" value="P:DNA damage response, signal transduction resulting in transcription"/>
    <property type="evidence" value="ECO:0000250"/>
    <property type="project" value="UniProtKB"/>
</dbReference>
<dbReference type="GO" id="GO:0006302">
    <property type="term" value="P:double-strand break repair"/>
    <property type="evidence" value="ECO:0000250"/>
    <property type="project" value="UniProtKB"/>
</dbReference>
<dbReference type="GO" id="GO:0042177">
    <property type="term" value="P:negative regulation of protein catabolic process"/>
    <property type="evidence" value="ECO:0000250"/>
    <property type="project" value="UniProtKB"/>
</dbReference>
<dbReference type="GO" id="GO:1904667">
    <property type="term" value="P:negative regulation of ubiquitin protein ligase activity"/>
    <property type="evidence" value="ECO:0000250"/>
    <property type="project" value="UniProtKB"/>
</dbReference>
<dbReference type="GO" id="GO:0045893">
    <property type="term" value="P:positive regulation of DNA-templated transcription"/>
    <property type="evidence" value="ECO:0000250"/>
    <property type="project" value="UniProtKB"/>
</dbReference>
<dbReference type="GO" id="GO:0033138">
    <property type="term" value="P:positive regulation of peptidyl-serine phosphorylation"/>
    <property type="evidence" value="ECO:0000250"/>
    <property type="project" value="UniProtKB"/>
</dbReference>
<dbReference type="GO" id="GO:0001558">
    <property type="term" value="P:regulation of cell growth"/>
    <property type="evidence" value="ECO:0000250"/>
    <property type="project" value="UniProtKB"/>
</dbReference>
<dbReference type="FunFam" id="3.30.900.10:FF:000003">
    <property type="entry name" value="Mitotic spindle assembly checkpoint protein MAD2B"/>
    <property type="match status" value="1"/>
</dbReference>
<dbReference type="Gene3D" id="3.30.900.10">
    <property type="entry name" value="HORMA domain"/>
    <property type="match status" value="1"/>
</dbReference>
<dbReference type="InterPro" id="IPR003511">
    <property type="entry name" value="HORMA_dom"/>
</dbReference>
<dbReference type="InterPro" id="IPR036570">
    <property type="entry name" value="HORMA_dom_sf"/>
</dbReference>
<dbReference type="InterPro" id="IPR045091">
    <property type="entry name" value="Mad2-like"/>
</dbReference>
<dbReference type="PANTHER" id="PTHR11842">
    <property type="entry name" value="MITOTIC SPINDLE ASSEMBLY CHECKPOINT PROTEIN MAD2"/>
    <property type="match status" value="1"/>
</dbReference>
<dbReference type="PANTHER" id="PTHR11842:SF15">
    <property type="entry name" value="MITOTIC SPINDLE ASSEMBLY CHECKPOINT PROTEIN MAD2B"/>
    <property type="match status" value="1"/>
</dbReference>
<dbReference type="Pfam" id="PF02301">
    <property type="entry name" value="HORMA"/>
    <property type="match status" value="1"/>
</dbReference>
<dbReference type="SUPFAM" id="SSF56019">
    <property type="entry name" value="The spindle assembly checkpoint protein mad2"/>
    <property type="match status" value="1"/>
</dbReference>
<dbReference type="PROSITE" id="PS50815">
    <property type="entry name" value="HORMA"/>
    <property type="match status" value="1"/>
</dbReference>
<feature type="chain" id="PRO_0000405243" description="Mitotic spindle assembly checkpoint protein MAD2B">
    <location>
        <begin position="1"/>
        <end position="211"/>
    </location>
</feature>
<feature type="domain" description="HORMA" evidence="3">
    <location>
        <begin position="13"/>
        <end position="203"/>
    </location>
</feature>
<feature type="region of interest" description="Mediates interaction with REV1 and REV3L and homodimerization" evidence="1">
    <location>
        <begin position="21"/>
        <end position="155"/>
    </location>
</feature>
<proteinExistence type="evidence at transcript level"/>
<protein>
    <recommendedName>
        <fullName>Mitotic spindle assembly checkpoint protein MAD2B</fullName>
    </recommendedName>
    <alternativeName>
        <fullName>Mitotic arrest deficient 2-like protein 2</fullName>
        <shortName>MAD2-like protein 2</shortName>
    </alternativeName>
</protein>
<name>MD2L2_BOVIN</name>
<keyword id="KW-0131">Cell cycle</keyword>
<keyword id="KW-0132">Cell division</keyword>
<keyword id="KW-0963">Cytoplasm</keyword>
<keyword id="KW-0206">Cytoskeleton</keyword>
<keyword id="KW-0227">DNA damage</keyword>
<keyword id="KW-0498">Mitosis</keyword>
<keyword id="KW-0539">Nucleus</keyword>
<keyword id="KW-1185">Reference proteome</keyword>
<keyword id="KW-0804">Transcription</keyword>
<keyword id="KW-0805">Transcription regulation</keyword>
<reference key="1">
    <citation type="submission" date="2006-01" db="EMBL/GenBank/DDBJ databases">
        <authorList>
            <consortium name="NIH - Mammalian Gene Collection (MGC) project"/>
        </authorList>
    </citation>
    <scope>NUCLEOTIDE SEQUENCE [LARGE SCALE MRNA]</scope>
    <source>
        <strain>Hereford</strain>
        <tissue>Testis</tissue>
    </source>
</reference>
<organism>
    <name type="scientific">Bos taurus</name>
    <name type="common">Bovine</name>
    <dbReference type="NCBI Taxonomy" id="9913"/>
    <lineage>
        <taxon>Eukaryota</taxon>
        <taxon>Metazoa</taxon>
        <taxon>Chordata</taxon>
        <taxon>Craniata</taxon>
        <taxon>Vertebrata</taxon>
        <taxon>Euteleostomi</taxon>
        <taxon>Mammalia</taxon>
        <taxon>Eutheria</taxon>
        <taxon>Laurasiatheria</taxon>
        <taxon>Artiodactyla</taxon>
        <taxon>Ruminantia</taxon>
        <taxon>Pecora</taxon>
        <taxon>Bovidae</taxon>
        <taxon>Bovinae</taxon>
        <taxon>Bos</taxon>
    </lineage>
</organism>
<comment type="function">
    <text evidence="2">Adapter protein able to interact with different proteins and involved in different biological processes. Mediates the interaction between the error-prone DNA polymerase zeta catalytic subunit REV3L and the inserter polymerase REV1, thereby mediating the second polymerase switching in translesion DNA synthesis. Translesion DNA synthesis releases the replication blockade of replicative polymerases, stalled in presence of DNA lesions. Component of the shieldin complex, which plays an important role in repair of DNA double-stranded breaks (DSBs). During G1 and S phase of the cell cycle, the complex functions downstream of TP53BP1 to promote non-homologous end joining (NHEJ) and suppress DNA end resection. Mediates various NHEJ-dependent processes including immunoglobulin class-switch recombination, and fusion of unprotected telomeres. May also regulate another aspect of cellular response to DNA damage through regulation of the JNK-mediated phosphorylation and activation of the transcriptional activator ELK1. Inhibits the FZR1- and probably CDC20-mediated activation of the anaphase promoting complex APC thereby regulating progression through the cell cycle. Regulates TCF7L2-mediated gene transcription and may play a role in epithelial-mesenchymal transdifferentiation.</text>
</comment>
<comment type="subunit">
    <text evidence="2">Homooligomer. Heterodimer with REV3L. This dimer forms the minimal DNA polymerase zeta complex (Pol-zeta2), with REV3L bearing DNA polymerase catalytic activity, although its activity is very low in this context. Component of the tetrameric Pol-zeta complex (Pol-zeta4), which consists of REV3L, MAD2L2, POLD2 and POLD3; Pol-zeta4 is the fully active form of DNA polymerase zeta. Component of the shieldin complex, consisting of SHLD1, SHLD2, SHLD3 and MAD2L2/REV7. Within the complex, SHLD2 forms a scaffold which interacts with a SHLD3-MAD2L2 subcomplex via its N-terminus, and with SHLD1 via its C-terminus. Interacts with REV1. Interacts with ADAM9. Interacts with CHAMP1. Interacts with FZR1 (in complex with the anaphase promoting complex APC). May interact with CDC20. Interacts with RAN. Interacts with ELK1; the interaction is direct and recruits MAD2L2 to ELK1-specific promoters. May interact with the JNK kinases MAPK8 and/or MAPK9 to stimulate ELK1 phosphorylation and transcriptional activity upon DNA damage. Interacts with TCF7L2; prevents its binding to promoters and negatively modulates its transcriptional activity. Interacts with YY1AP1. Interacts with PRCC; the interaction is direct. Interacts with POGZ. Interacts with ASTE1.</text>
</comment>
<comment type="subcellular location">
    <subcellularLocation>
        <location evidence="1">Nucleus</location>
    </subcellularLocation>
    <subcellularLocation>
        <location evidence="1">Cytoplasm</location>
        <location evidence="1">Cytoskeleton</location>
        <location evidence="1">Spindle</location>
    </subcellularLocation>
    <subcellularLocation>
        <location evidence="1">Cytoplasm</location>
    </subcellularLocation>
</comment>
<gene>
    <name type="primary">MAD2L2</name>
</gene>
<sequence>MTTLTRQDLNFGQVVADVLCEFLEVAVHLILYVREVYPVGIFQKRKKYNVPVQMSCHPELNQYIQDTLHCVKPLLEKNDVEKVVVVILDKEHRPVEKFVFEITQPPLLPISSDSLLSHVEQLLRAFILKISVCDAVLDHNPPGCTFTVLVHTREAATRNMEKIQVIKDFPWILADEQDVHMHDPRLIPLKTMTSDILKMQLYVEERAHKSS</sequence>